<name>DPO4_STAHJ</name>
<dbReference type="EC" id="2.7.7.7" evidence="1"/>
<dbReference type="EMBL" id="AP006716">
    <property type="protein sequence ID" value="BAE04367.1"/>
    <property type="molecule type" value="Genomic_DNA"/>
</dbReference>
<dbReference type="RefSeq" id="WP_011275363.1">
    <property type="nucleotide sequence ID" value="NC_007168.1"/>
</dbReference>
<dbReference type="SMR" id="Q4L7K8"/>
<dbReference type="KEGG" id="sha:SH1058"/>
<dbReference type="eggNOG" id="COG0389">
    <property type="taxonomic scope" value="Bacteria"/>
</dbReference>
<dbReference type="HOGENOM" id="CLU_012348_1_2_9"/>
<dbReference type="OrthoDB" id="9808813at2"/>
<dbReference type="Proteomes" id="UP000000543">
    <property type="component" value="Chromosome"/>
</dbReference>
<dbReference type="GO" id="GO:0005829">
    <property type="term" value="C:cytosol"/>
    <property type="evidence" value="ECO:0007669"/>
    <property type="project" value="TreeGrafter"/>
</dbReference>
<dbReference type="GO" id="GO:0003684">
    <property type="term" value="F:damaged DNA binding"/>
    <property type="evidence" value="ECO:0007669"/>
    <property type="project" value="InterPro"/>
</dbReference>
<dbReference type="GO" id="GO:0003887">
    <property type="term" value="F:DNA-directed DNA polymerase activity"/>
    <property type="evidence" value="ECO:0007669"/>
    <property type="project" value="UniProtKB-UniRule"/>
</dbReference>
<dbReference type="GO" id="GO:0000287">
    <property type="term" value="F:magnesium ion binding"/>
    <property type="evidence" value="ECO:0007669"/>
    <property type="project" value="UniProtKB-UniRule"/>
</dbReference>
<dbReference type="GO" id="GO:0006261">
    <property type="term" value="P:DNA-templated DNA replication"/>
    <property type="evidence" value="ECO:0007669"/>
    <property type="project" value="UniProtKB-UniRule"/>
</dbReference>
<dbReference type="GO" id="GO:0042276">
    <property type="term" value="P:error-prone translesion synthesis"/>
    <property type="evidence" value="ECO:0007669"/>
    <property type="project" value="TreeGrafter"/>
</dbReference>
<dbReference type="GO" id="GO:0009432">
    <property type="term" value="P:SOS response"/>
    <property type="evidence" value="ECO:0007669"/>
    <property type="project" value="TreeGrafter"/>
</dbReference>
<dbReference type="CDD" id="cd03586">
    <property type="entry name" value="PolY_Pol_IV_kappa"/>
    <property type="match status" value="1"/>
</dbReference>
<dbReference type="FunFam" id="3.30.1490.100:FF:000004">
    <property type="entry name" value="DNA polymerase IV"/>
    <property type="match status" value="1"/>
</dbReference>
<dbReference type="FunFam" id="3.40.1170.60:FF:000001">
    <property type="entry name" value="DNA polymerase IV"/>
    <property type="match status" value="1"/>
</dbReference>
<dbReference type="Gene3D" id="3.30.70.270">
    <property type="match status" value="1"/>
</dbReference>
<dbReference type="Gene3D" id="3.40.1170.60">
    <property type="match status" value="1"/>
</dbReference>
<dbReference type="Gene3D" id="1.10.150.20">
    <property type="entry name" value="5' to 3' exonuclease, C-terminal subdomain"/>
    <property type="match status" value="1"/>
</dbReference>
<dbReference type="Gene3D" id="3.30.1490.100">
    <property type="entry name" value="DNA polymerase, Y-family, little finger domain"/>
    <property type="match status" value="1"/>
</dbReference>
<dbReference type="HAMAP" id="MF_01113">
    <property type="entry name" value="DNApol_IV"/>
    <property type="match status" value="1"/>
</dbReference>
<dbReference type="InterPro" id="IPR043502">
    <property type="entry name" value="DNA/RNA_pol_sf"/>
</dbReference>
<dbReference type="InterPro" id="IPR036775">
    <property type="entry name" value="DNA_pol_Y-fam_lit_finger_sf"/>
</dbReference>
<dbReference type="InterPro" id="IPR017961">
    <property type="entry name" value="DNA_pol_Y-fam_little_finger"/>
</dbReference>
<dbReference type="InterPro" id="IPR050116">
    <property type="entry name" value="DNA_polymerase-Y"/>
</dbReference>
<dbReference type="InterPro" id="IPR022880">
    <property type="entry name" value="DNApol_IV"/>
</dbReference>
<dbReference type="InterPro" id="IPR043128">
    <property type="entry name" value="Rev_trsase/Diguanyl_cyclase"/>
</dbReference>
<dbReference type="InterPro" id="IPR001126">
    <property type="entry name" value="UmuC"/>
</dbReference>
<dbReference type="NCBIfam" id="NF002677">
    <property type="entry name" value="PRK02406.1"/>
    <property type="match status" value="1"/>
</dbReference>
<dbReference type="NCBIfam" id="NF010731">
    <property type="entry name" value="PRK14133.1"/>
    <property type="match status" value="1"/>
</dbReference>
<dbReference type="PANTHER" id="PTHR11076:SF33">
    <property type="entry name" value="DNA POLYMERASE KAPPA"/>
    <property type="match status" value="1"/>
</dbReference>
<dbReference type="PANTHER" id="PTHR11076">
    <property type="entry name" value="DNA REPAIR POLYMERASE UMUC / TRANSFERASE FAMILY MEMBER"/>
    <property type="match status" value="1"/>
</dbReference>
<dbReference type="Pfam" id="PF00817">
    <property type="entry name" value="IMS"/>
    <property type="match status" value="1"/>
</dbReference>
<dbReference type="Pfam" id="PF11799">
    <property type="entry name" value="IMS_C"/>
    <property type="match status" value="1"/>
</dbReference>
<dbReference type="SUPFAM" id="SSF56672">
    <property type="entry name" value="DNA/RNA polymerases"/>
    <property type="match status" value="1"/>
</dbReference>
<dbReference type="SUPFAM" id="SSF100879">
    <property type="entry name" value="Lesion bypass DNA polymerase (Y-family), little finger domain"/>
    <property type="match status" value="1"/>
</dbReference>
<dbReference type="PROSITE" id="PS50173">
    <property type="entry name" value="UMUC"/>
    <property type="match status" value="1"/>
</dbReference>
<protein>
    <recommendedName>
        <fullName evidence="1">DNA polymerase IV</fullName>
        <shortName evidence="1">Pol IV</shortName>
        <ecNumber evidence="1">2.7.7.7</ecNumber>
    </recommendedName>
</protein>
<keyword id="KW-0963">Cytoplasm</keyword>
<keyword id="KW-0227">DNA damage</keyword>
<keyword id="KW-0234">DNA repair</keyword>
<keyword id="KW-0235">DNA replication</keyword>
<keyword id="KW-0238">DNA-binding</keyword>
<keyword id="KW-0239">DNA-directed DNA polymerase</keyword>
<keyword id="KW-0460">Magnesium</keyword>
<keyword id="KW-0479">Metal-binding</keyword>
<keyword id="KW-0515">Mutator protein</keyword>
<keyword id="KW-0548">Nucleotidyltransferase</keyword>
<keyword id="KW-0808">Transferase</keyword>
<proteinExistence type="inferred from homology"/>
<feature type="chain" id="PRO_0000173951" description="DNA polymerase IV">
    <location>
        <begin position="1"/>
        <end position="358"/>
    </location>
</feature>
<feature type="domain" description="UmuC" evidence="1">
    <location>
        <begin position="6"/>
        <end position="187"/>
    </location>
</feature>
<feature type="active site" evidence="1">
    <location>
        <position position="106"/>
    </location>
</feature>
<feature type="binding site" evidence="1">
    <location>
        <position position="10"/>
    </location>
    <ligand>
        <name>Mg(2+)</name>
        <dbReference type="ChEBI" id="CHEBI:18420"/>
    </ligand>
</feature>
<feature type="binding site" evidence="1">
    <location>
        <position position="105"/>
    </location>
    <ligand>
        <name>Mg(2+)</name>
        <dbReference type="ChEBI" id="CHEBI:18420"/>
    </ligand>
</feature>
<feature type="site" description="Substrate discrimination" evidence="1">
    <location>
        <position position="15"/>
    </location>
</feature>
<sequence length="358" mass="40752">MAERRIIHIDMDYFFAQVEMRDNPTLKGKPVIVGGKASTRGVVSTASYEARKYGVHSAMPMSQAHKLCPNGYYVRARFDAYREASAVIMSIFKSYTDIVEPMSLDEAYLDITHLVRPDLSASKIATFIRRDIFEQTGLTSSAGVSYNKFLAKLASGMNKPNGMKVIDYNNVNDILMNLDIGDFPGVGKASKKVMHNHDIYTGKDLYDKTEFELIRWFGKRGRGLYLKARGIDHSEVKATRVRKSVGTERTFSTDVNDDEEILQKIWELSGKTAERLSKLQKSGSTVTVKLKTYQYETFSKQRSLREAVSRDIDIYNVAYDLYNDLKDPDVPIRLIGVTVGNLEQSRYENMTIYDFIER</sequence>
<reference key="1">
    <citation type="journal article" date="2005" name="J. Bacteriol.">
        <title>Whole-genome sequencing of Staphylococcus haemolyticus uncovers the extreme plasticity of its genome and the evolution of human-colonizing staphylococcal species.</title>
        <authorList>
            <person name="Takeuchi F."/>
            <person name="Watanabe S."/>
            <person name="Baba T."/>
            <person name="Yuzawa H."/>
            <person name="Ito T."/>
            <person name="Morimoto Y."/>
            <person name="Kuroda M."/>
            <person name="Cui L."/>
            <person name="Takahashi M."/>
            <person name="Ankai A."/>
            <person name="Baba S."/>
            <person name="Fukui S."/>
            <person name="Lee J.C."/>
            <person name="Hiramatsu K."/>
        </authorList>
    </citation>
    <scope>NUCLEOTIDE SEQUENCE [LARGE SCALE GENOMIC DNA]</scope>
    <source>
        <strain>JCSC1435</strain>
    </source>
</reference>
<gene>
    <name evidence="1" type="primary">dinB</name>
    <name type="ordered locus">SH1058</name>
</gene>
<evidence type="ECO:0000255" key="1">
    <source>
        <dbReference type="HAMAP-Rule" id="MF_01113"/>
    </source>
</evidence>
<organism>
    <name type="scientific">Staphylococcus haemolyticus (strain JCSC1435)</name>
    <dbReference type="NCBI Taxonomy" id="279808"/>
    <lineage>
        <taxon>Bacteria</taxon>
        <taxon>Bacillati</taxon>
        <taxon>Bacillota</taxon>
        <taxon>Bacilli</taxon>
        <taxon>Bacillales</taxon>
        <taxon>Staphylococcaceae</taxon>
        <taxon>Staphylococcus</taxon>
    </lineage>
</organism>
<accession>Q4L7K8</accession>
<comment type="function">
    <text evidence="1">Poorly processive, error-prone DNA polymerase involved in untargeted mutagenesis. Copies undamaged DNA at stalled replication forks, which arise in vivo from mismatched or misaligned primer ends. These misaligned primers can be extended by PolIV. Exhibits no 3'-5' exonuclease (proofreading) activity. May be involved in translesional synthesis, in conjunction with the beta clamp from PolIII.</text>
</comment>
<comment type="catalytic activity">
    <reaction evidence="1">
        <text>DNA(n) + a 2'-deoxyribonucleoside 5'-triphosphate = DNA(n+1) + diphosphate</text>
        <dbReference type="Rhea" id="RHEA:22508"/>
        <dbReference type="Rhea" id="RHEA-COMP:17339"/>
        <dbReference type="Rhea" id="RHEA-COMP:17340"/>
        <dbReference type="ChEBI" id="CHEBI:33019"/>
        <dbReference type="ChEBI" id="CHEBI:61560"/>
        <dbReference type="ChEBI" id="CHEBI:173112"/>
        <dbReference type="EC" id="2.7.7.7"/>
    </reaction>
</comment>
<comment type="cofactor">
    <cofactor evidence="1">
        <name>Mg(2+)</name>
        <dbReference type="ChEBI" id="CHEBI:18420"/>
    </cofactor>
    <text evidence="1">Binds 2 magnesium ions per subunit.</text>
</comment>
<comment type="subunit">
    <text evidence="1">Monomer.</text>
</comment>
<comment type="subcellular location">
    <subcellularLocation>
        <location evidence="1">Cytoplasm</location>
    </subcellularLocation>
</comment>
<comment type="similarity">
    <text evidence="1">Belongs to the DNA polymerase type-Y family.</text>
</comment>